<sequence length="377" mass="42061">MCDEDETTALVCDNGSGLVKAGFAGDDAPRAVFPSIVGRPRHQGVMVGMGQKDSYVGDEAQSKRGILTLKYPIEHGIITNWDDMEKIWHHTFYNELRVAPEEHPTLLTEAPLNPKANREKMTQIMFETFNVPAMYVAIQAVLPLYASGRTTGIVLDSGDGVTHNVPIYEGYALPHAIMRLDLAGRDLTDYLMKILTERGYSFVTTAEREIVRDIKEKLCYVALDFENEMATAASSSSLEKSYELPDGQVITIGNERFRCPETLFQPSFIGMESAGIHETTYNSIMKCDIDIRKDLYANNVMSGGTTMYPGIADRMQKEITALAPSTMKIKIIAPPERKYSVWIGGSILASLSTFQQMWITKQEYDEAGPSIVHRKCF</sequence>
<name>ACTS_ATRMM</name>
<evidence type="ECO:0000250" key="1">
    <source>
        <dbReference type="UniProtKB" id="P62737"/>
    </source>
</evidence>
<evidence type="ECO:0000250" key="2">
    <source>
        <dbReference type="UniProtKB" id="P68133"/>
    </source>
</evidence>
<evidence type="ECO:0000250" key="3">
    <source>
        <dbReference type="UniProtKB" id="P68134"/>
    </source>
</evidence>
<evidence type="ECO:0000250" key="4">
    <source>
        <dbReference type="UniProtKB" id="P68135"/>
    </source>
</evidence>
<evidence type="ECO:0000250" key="5">
    <source>
        <dbReference type="UniProtKB" id="P68137"/>
    </source>
</evidence>
<evidence type="ECO:0000305" key="6"/>
<comment type="function">
    <text>Actins are highly conserved proteins that are involved in various types of cell motility and are ubiquitously expressed in all eukaryotic cells.</text>
</comment>
<comment type="catalytic activity">
    <reaction evidence="5">
        <text>ATP + H2O = ADP + phosphate + H(+)</text>
        <dbReference type="Rhea" id="RHEA:13065"/>
        <dbReference type="ChEBI" id="CHEBI:15377"/>
        <dbReference type="ChEBI" id="CHEBI:15378"/>
        <dbReference type="ChEBI" id="CHEBI:30616"/>
        <dbReference type="ChEBI" id="CHEBI:43474"/>
        <dbReference type="ChEBI" id="CHEBI:456216"/>
    </reaction>
</comment>
<comment type="subunit">
    <text>Polymerization of globular actin (G-actin) leads to a structural filament (F-actin) in the form of a two-stranded helix. Each actin can bind to 4 others.</text>
</comment>
<comment type="subcellular location">
    <subcellularLocation>
        <location>Cytoplasm</location>
        <location>Cytoskeleton</location>
    </subcellularLocation>
</comment>
<comment type="PTM">
    <molecule>Actin, alpha skeletal muscle, intermediate form</molecule>
    <text evidence="3">N-terminal cleavage of acetylated cysteine of intermediate muscle actin by ACTMAP.</text>
</comment>
<comment type="PTM">
    <text evidence="3">Oxidation of Met-46 and Met-49 by MICALs (MICAL1, MICAL2 or MICAL3) to form methionine sulfoxide promotes actin filament depolymerization. MICAL1 and MICAL2 produce the (R)-S-oxide form. The (R)-S-oxide form is reverted by MSRB1 and MSRB2, which promotes actin repolymerization.</text>
</comment>
<comment type="PTM">
    <text evidence="2">Monomethylation at Lys-86 (K84me1) regulates actin-myosin interaction and actomyosin-dependent processes. Demethylation by ALKBH4 is required for maintaining actomyosin dynamics supporting normal cleavage furrow ingression during cytokinesis and cell migration.</text>
</comment>
<comment type="PTM">
    <text evidence="2">Methylated at His-75 by SETD3.</text>
</comment>
<comment type="miscellaneous">
    <text>In vertebrates 3 main groups of actin isoforms, alpha, beta and gamma have been identified. The alpha actins are found in muscle tissues and are a major constituent of the contractile apparatus. The beta and gamma actins coexist in most cell types as components of the cytoskeleton and as mediators of internal cell motility.</text>
</comment>
<comment type="similarity">
    <text evidence="6">Belongs to the actin family.</text>
</comment>
<gene>
    <name type="primary">ACTA1</name>
</gene>
<feature type="initiator methionine" description="Removed">
    <location>
        <position position="1"/>
    </location>
</feature>
<feature type="chain" id="PRO_0000442817" description="Actin, alpha skeletal muscle, intermediate form" evidence="1">
    <location>
        <begin position="2"/>
        <end position="377"/>
    </location>
</feature>
<feature type="chain" id="PRO_0000442818" description="Actin, alpha skeletal muscle" evidence="1">
    <location>
        <begin position="3"/>
        <end position="377"/>
    </location>
</feature>
<feature type="modified residue" description="N-acetylcysteine; in intermediate form" evidence="1">
    <location>
        <position position="2"/>
    </location>
</feature>
<feature type="modified residue" description="N-acetylaspartate; in Actin, alpha skeletal muscle" evidence="4">
    <location>
        <position position="3"/>
    </location>
</feature>
<feature type="modified residue" description="Methionine (R)-sulfoxide" evidence="3">
    <location>
        <position position="46"/>
    </location>
</feature>
<feature type="modified residue" description="Methionine (R)-sulfoxide" evidence="3">
    <location>
        <position position="49"/>
    </location>
</feature>
<feature type="modified residue" description="Tele-methylhistidine" evidence="4">
    <location>
        <position position="75"/>
    </location>
</feature>
<feature type="modified residue" description="N6-methyllysine" evidence="2">
    <location>
        <position position="86"/>
    </location>
</feature>
<proteinExistence type="evidence at transcript level"/>
<dbReference type="EC" id="3.6.4.-" evidence="5"/>
<dbReference type="EMBL" id="AF416707">
    <property type="protein sequence ID" value="AAL09696.1"/>
    <property type="molecule type" value="mRNA"/>
</dbReference>
<dbReference type="SMR" id="Q90X97"/>
<dbReference type="GO" id="GO:0005737">
    <property type="term" value="C:cytoplasm"/>
    <property type="evidence" value="ECO:0007669"/>
    <property type="project" value="UniProtKB-KW"/>
</dbReference>
<dbReference type="GO" id="GO:0005856">
    <property type="term" value="C:cytoskeleton"/>
    <property type="evidence" value="ECO:0007669"/>
    <property type="project" value="UniProtKB-SubCell"/>
</dbReference>
<dbReference type="GO" id="GO:0005524">
    <property type="term" value="F:ATP binding"/>
    <property type="evidence" value="ECO:0007669"/>
    <property type="project" value="UniProtKB-KW"/>
</dbReference>
<dbReference type="GO" id="GO:0016787">
    <property type="term" value="F:hydrolase activity"/>
    <property type="evidence" value="ECO:0007669"/>
    <property type="project" value="UniProtKB-KW"/>
</dbReference>
<dbReference type="CDD" id="cd10224">
    <property type="entry name" value="ASKHA_NBD_actin"/>
    <property type="match status" value="1"/>
</dbReference>
<dbReference type="FunFam" id="3.30.420.40:FF:000131">
    <property type="entry name" value="Actin, alpha skeletal muscle"/>
    <property type="match status" value="1"/>
</dbReference>
<dbReference type="FunFam" id="3.30.420.40:FF:000205">
    <property type="entry name" value="Actin, alpha skeletal muscle"/>
    <property type="match status" value="1"/>
</dbReference>
<dbReference type="FunFam" id="3.90.640.10:FF:000047">
    <property type="entry name" value="Actin, alpha skeletal muscle"/>
    <property type="match status" value="1"/>
</dbReference>
<dbReference type="FunFam" id="3.30.420.40:FF:000002">
    <property type="entry name" value="Muscle actin"/>
    <property type="match status" value="1"/>
</dbReference>
<dbReference type="FunFam" id="3.30.420.40:FF:000058">
    <property type="entry name" value="Putative actin-related protein 5"/>
    <property type="match status" value="1"/>
</dbReference>
<dbReference type="Gene3D" id="3.30.420.40">
    <property type="match status" value="2"/>
</dbReference>
<dbReference type="Gene3D" id="3.90.640.10">
    <property type="entry name" value="Actin, Chain A, domain 4"/>
    <property type="match status" value="1"/>
</dbReference>
<dbReference type="InterPro" id="IPR004000">
    <property type="entry name" value="Actin"/>
</dbReference>
<dbReference type="InterPro" id="IPR020902">
    <property type="entry name" value="Actin/actin-like_CS"/>
</dbReference>
<dbReference type="InterPro" id="IPR004001">
    <property type="entry name" value="Actin_CS"/>
</dbReference>
<dbReference type="InterPro" id="IPR043129">
    <property type="entry name" value="ATPase_NBD"/>
</dbReference>
<dbReference type="PANTHER" id="PTHR11937">
    <property type="entry name" value="ACTIN"/>
    <property type="match status" value="1"/>
</dbReference>
<dbReference type="Pfam" id="PF00022">
    <property type="entry name" value="Actin"/>
    <property type="match status" value="1"/>
</dbReference>
<dbReference type="PRINTS" id="PR00190">
    <property type="entry name" value="ACTIN"/>
</dbReference>
<dbReference type="SMART" id="SM00268">
    <property type="entry name" value="ACTIN"/>
    <property type="match status" value="1"/>
</dbReference>
<dbReference type="SUPFAM" id="SSF53067">
    <property type="entry name" value="Actin-like ATPase domain"/>
    <property type="match status" value="2"/>
</dbReference>
<dbReference type="PROSITE" id="PS00406">
    <property type="entry name" value="ACTINS_1"/>
    <property type="match status" value="1"/>
</dbReference>
<dbReference type="PROSITE" id="PS00432">
    <property type="entry name" value="ACTINS_2"/>
    <property type="match status" value="1"/>
</dbReference>
<dbReference type="PROSITE" id="PS01132">
    <property type="entry name" value="ACTINS_ACT_LIKE"/>
    <property type="match status" value="1"/>
</dbReference>
<protein>
    <recommendedName>
        <fullName>Actin, alpha skeletal muscle</fullName>
        <ecNumber evidence="5">3.6.4.-</ecNumber>
    </recommendedName>
    <alternativeName>
        <fullName>Alpha-actin-1</fullName>
    </alternativeName>
    <component>
        <recommendedName>
            <fullName>Actin, alpha skeletal muscle, intermediate form</fullName>
        </recommendedName>
    </component>
</protein>
<keyword id="KW-0007">Acetylation</keyword>
<keyword id="KW-0067">ATP-binding</keyword>
<keyword id="KW-0963">Cytoplasm</keyword>
<keyword id="KW-0206">Cytoskeleton</keyword>
<keyword id="KW-0378">Hydrolase</keyword>
<keyword id="KW-0488">Methylation</keyword>
<keyword id="KW-0514">Muscle protein</keyword>
<keyword id="KW-0547">Nucleotide-binding</keyword>
<keyword id="KW-0558">Oxidation</keyword>
<reference key="1">
    <citation type="submission" date="2001-09" db="EMBL/GenBank/DDBJ databases">
        <title>Cloning and sequencing of cDNA coding for snake actin.</title>
        <authorList>
            <person name="Hayashi M.A.F."/>
            <person name="Camargo A.C.M."/>
            <person name="Ducancel F."/>
        </authorList>
    </citation>
    <scope>NUCLEOTIDE SEQUENCE [MRNA]</scope>
    <source>
        <tissue>Venom gland</tissue>
    </source>
</reference>
<accession>Q90X97</accession>
<organism>
    <name type="scientific">Atractaspis microlepidota microlepidota</name>
    <dbReference type="NCBI Taxonomy" id="172021"/>
    <lineage>
        <taxon>Eukaryota</taxon>
        <taxon>Metazoa</taxon>
        <taxon>Chordata</taxon>
        <taxon>Craniata</taxon>
        <taxon>Vertebrata</taxon>
        <taxon>Euteleostomi</taxon>
        <taxon>Lepidosauria</taxon>
        <taxon>Squamata</taxon>
        <taxon>Bifurcata</taxon>
        <taxon>Unidentata</taxon>
        <taxon>Episquamata</taxon>
        <taxon>Toxicofera</taxon>
        <taxon>Serpentes</taxon>
        <taxon>Colubroidea</taxon>
        <taxon>Lamprophiidae</taxon>
        <taxon>Atractaspidinae</taxon>
        <taxon>Atractaspis</taxon>
    </lineage>
</organism>